<dbReference type="EMBL" id="CP000026">
    <property type="protein sequence ID" value="AAV79105.1"/>
    <property type="molecule type" value="Genomic_DNA"/>
</dbReference>
<dbReference type="RefSeq" id="WP_000940121.1">
    <property type="nucleotide sequence ID" value="NC_006511.1"/>
</dbReference>
<dbReference type="SMR" id="Q5PK01"/>
<dbReference type="GeneID" id="93778684"/>
<dbReference type="KEGG" id="spt:SPA3289"/>
<dbReference type="HOGENOM" id="CLU_065898_2_2_6"/>
<dbReference type="Proteomes" id="UP000008185">
    <property type="component" value="Chromosome"/>
</dbReference>
<dbReference type="GO" id="GO:0015935">
    <property type="term" value="C:small ribosomal subunit"/>
    <property type="evidence" value="ECO:0007669"/>
    <property type="project" value="InterPro"/>
</dbReference>
<dbReference type="GO" id="GO:0019843">
    <property type="term" value="F:rRNA binding"/>
    <property type="evidence" value="ECO:0007669"/>
    <property type="project" value="UniProtKB-UniRule"/>
</dbReference>
<dbReference type="GO" id="GO:0003735">
    <property type="term" value="F:structural constituent of ribosome"/>
    <property type="evidence" value="ECO:0007669"/>
    <property type="project" value="InterPro"/>
</dbReference>
<dbReference type="GO" id="GO:0006412">
    <property type="term" value="P:translation"/>
    <property type="evidence" value="ECO:0007669"/>
    <property type="project" value="UniProtKB-UniRule"/>
</dbReference>
<dbReference type="FunFam" id="3.30.160.20:FF:000001">
    <property type="entry name" value="30S ribosomal protein S5"/>
    <property type="match status" value="1"/>
</dbReference>
<dbReference type="FunFam" id="3.30.230.10:FF:000002">
    <property type="entry name" value="30S ribosomal protein S5"/>
    <property type="match status" value="1"/>
</dbReference>
<dbReference type="Gene3D" id="3.30.160.20">
    <property type="match status" value="1"/>
</dbReference>
<dbReference type="Gene3D" id="3.30.230.10">
    <property type="match status" value="1"/>
</dbReference>
<dbReference type="HAMAP" id="MF_01307_B">
    <property type="entry name" value="Ribosomal_uS5_B"/>
    <property type="match status" value="1"/>
</dbReference>
<dbReference type="InterPro" id="IPR020568">
    <property type="entry name" value="Ribosomal_Su5_D2-typ_SF"/>
</dbReference>
<dbReference type="InterPro" id="IPR000851">
    <property type="entry name" value="Ribosomal_uS5"/>
</dbReference>
<dbReference type="InterPro" id="IPR005712">
    <property type="entry name" value="Ribosomal_uS5_bac-type"/>
</dbReference>
<dbReference type="InterPro" id="IPR005324">
    <property type="entry name" value="Ribosomal_uS5_C"/>
</dbReference>
<dbReference type="InterPro" id="IPR013810">
    <property type="entry name" value="Ribosomal_uS5_N"/>
</dbReference>
<dbReference type="InterPro" id="IPR018192">
    <property type="entry name" value="Ribosomal_uS5_N_CS"/>
</dbReference>
<dbReference type="InterPro" id="IPR014721">
    <property type="entry name" value="Ribsml_uS5_D2-typ_fold_subgr"/>
</dbReference>
<dbReference type="NCBIfam" id="TIGR01021">
    <property type="entry name" value="rpsE_bact"/>
    <property type="match status" value="1"/>
</dbReference>
<dbReference type="PANTHER" id="PTHR48277">
    <property type="entry name" value="MITOCHONDRIAL RIBOSOMAL PROTEIN S5"/>
    <property type="match status" value="1"/>
</dbReference>
<dbReference type="PANTHER" id="PTHR48277:SF1">
    <property type="entry name" value="MITOCHONDRIAL RIBOSOMAL PROTEIN S5"/>
    <property type="match status" value="1"/>
</dbReference>
<dbReference type="Pfam" id="PF00333">
    <property type="entry name" value="Ribosomal_S5"/>
    <property type="match status" value="1"/>
</dbReference>
<dbReference type="Pfam" id="PF03719">
    <property type="entry name" value="Ribosomal_S5_C"/>
    <property type="match status" value="1"/>
</dbReference>
<dbReference type="SUPFAM" id="SSF54768">
    <property type="entry name" value="dsRNA-binding domain-like"/>
    <property type="match status" value="1"/>
</dbReference>
<dbReference type="SUPFAM" id="SSF54211">
    <property type="entry name" value="Ribosomal protein S5 domain 2-like"/>
    <property type="match status" value="1"/>
</dbReference>
<dbReference type="PROSITE" id="PS00585">
    <property type="entry name" value="RIBOSOMAL_S5"/>
    <property type="match status" value="1"/>
</dbReference>
<dbReference type="PROSITE" id="PS50881">
    <property type="entry name" value="S5_DSRBD"/>
    <property type="match status" value="1"/>
</dbReference>
<protein>
    <recommendedName>
        <fullName evidence="1">Small ribosomal subunit protein uS5</fullName>
    </recommendedName>
    <alternativeName>
        <fullName evidence="2">30S ribosomal protein S5</fullName>
    </alternativeName>
</protein>
<sequence length="167" mass="17603">MAHIEKQAGELQEKLIAVNRVSKTVKGGRIFSFTALTVVGDGNGRVGFGYGKAREVPAAIQKAMEKARRNMINVALNNGTLQHPVKGVHTGSRVFMQPASEGTGIIAGGAMRAVLEVAGVHNVLAKAYGSTNPINVVRATIDGLENMNSPEMVAAKRGKSVEEILGK</sequence>
<keyword id="KW-0687">Ribonucleoprotein</keyword>
<keyword id="KW-0689">Ribosomal protein</keyword>
<keyword id="KW-0694">RNA-binding</keyword>
<keyword id="KW-0699">rRNA-binding</keyword>
<comment type="function">
    <text evidence="1">With S4 and S12 plays an important role in translational accuracy.</text>
</comment>
<comment type="function">
    <text evidence="1">Located at the back of the 30S subunit body where it stabilizes the conformation of the head with respect to the body.</text>
</comment>
<comment type="subunit">
    <text evidence="1">Part of the 30S ribosomal subunit. Contacts proteins S4 and S8.</text>
</comment>
<comment type="domain">
    <text>The N-terminal domain interacts with the head of the 30S subunit; the C-terminal domain interacts with the body and contacts protein S4. The interaction surface between S4 and S5 is involved in control of translational fidelity.</text>
</comment>
<comment type="similarity">
    <text evidence="1">Belongs to the universal ribosomal protein uS5 family.</text>
</comment>
<feature type="chain" id="PRO_0000131587" description="Small ribosomal subunit protein uS5">
    <location>
        <begin position="1"/>
        <end position="167"/>
    </location>
</feature>
<feature type="domain" description="S5 DRBM" evidence="1">
    <location>
        <begin position="11"/>
        <end position="74"/>
    </location>
</feature>
<proteinExistence type="inferred from homology"/>
<reference key="1">
    <citation type="journal article" date="2004" name="Nat. Genet.">
        <title>Comparison of genome degradation in Paratyphi A and Typhi, human-restricted serovars of Salmonella enterica that cause typhoid.</title>
        <authorList>
            <person name="McClelland M."/>
            <person name="Sanderson K.E."/>
            <person name="Clifton S.W."/>
            <person name="Latreille P."/>
            <person name="Porwollik S."/>
            <person name="Sabo A."/>
            <person name="Meyer R."/>
            <person name="Bieri T."/>
            <person name="Ozersky P."/>
            <person name="McLellan M."/>
            <person name="Harkins C.R."/>
            <person name="Wang C."/>
            <person name="Nguyen C."/>
            <person name="Berghoff A."/>
            <person name="Elliott G."/>
            <person name="Kohlberg S."/>
            <person name="Strong C."/>
            <person name="Du F."/>
            <person name="Carter J."/>
            <person name="Kremizki C."/>
            <person name="Layman D."/>
            <person name="Leonard S."/>
            <person name="Sun H."/>
            <person name="Fulton L."/>
            <person name="Nash W."/>
            <person name="Miner T."/>
            <person name="Minx P."/>
            <person name="Delehaunty K."/>
            <person name="Fronick C."/>
            <person name="Magrini V."/>
            <person name="Nhan M."/>
            <person name="Warren W."/>
            <person name="Florea L."/>
            <person name="Spieth J."/>
            <person name="Wilson R.K."/>
        </authorList>
    </citation>
    <scope>NUCLEOTIDE SEQUENCE [LARGE SCALE GENOMIC DNA]</scope>
    <source>
        <strain>ATCC 9150 / SARB42</strain>
    </source>
</reference>
<organism>
    <name type="scientific">Salmonella paratyphi A (strain ATCC 9150 / SARB42)</name>
    <dbReference type="NCBI Taxonomy" id="295319"/>
    <lineage>
        <taxon>Bacteria</taxon>
        <taxon>Pseudomonadati</taxon>
        <taxon>Pseudomonadota</taxon>
        <taxon>Gammaproteobacteria</taxon>
        <taxon>Enterobacterales</taxon>
        <taxon>Enterobacteriaceae</taxon>
        <taxon>Salmonella</taxon>
    </lineage>
</organism>
<accession>Q5PK01</accession>
<name>RS5_SALPA</name>
<gene>
    <name evidence="1" type="primary">rpsE</name>
    <name type="ordered locus">SPA3289</name>
</gene>
<evidence type="ECO:0000255" key="1">
    <source>
        <dbReference type="HAMAP-Rule" id="MF_01307"/>
    </source>
</evidence>
<evidence type="ECO:0000305" key="2"/>